<reference key="1">
    <citation type="journal article" date="2007" name="PLoS Genet.">
        <title>Patterns and implications of gene gain and loss in the evolution of Prochlorococcus.</title>
        <authorList>
            <person name="Kettler G.C."/>
            <person name="Martiny A.C."/>
            <person name="Huang K."/>
            <person name="Zucker J."/>
            <person name="Coleman M.L."/>
            <person name="Rodrigue S."/>
            <person name="Chen F."/>
            <person name="Lapidus A."/>
            <person name="Ferriera S."/>
            <person name="Johnson J."/>
            <person name="Steglich C."/>
            <person name="Church G.M."/>
            <person name="Richardson P."/>
            <person name="Chisholm S.W."/>
        </authorList>
    </citation>
    <scope>NUCLEOTIDE SEQUENCE [LARGE SCALE GENOMIC DNA]</scope>
    <source>
        <strain>NATL1A</strain>
    </source>
</reference>
<dbReference type="EC" id="5.4.99.25" evidence="1"/>
<dbReference type="EMBL" id="CP000553">
    <property type="protein sequence ID" value="ABM76330.1"/>
    <property type="molecule type" value="Genomic_DNA"/>
</dbReference>
<dbReference type="RefSeq" id="WP_011824324.1">
    <property type="nucleotide sequence ID" value="NC_008819.1"/>
</dbReference>
<dbReference type="SMR" id="A2C4C0"/>
<dbReference type="KEGG" id="pme:NATL1_17741"/>
<dbReference type="eggNOG" id="COG0130">
    <property type="taxonomic scope" value="Bacteria"/>
</dbReference>
<dbReference type="HOGENOM" id="CLU_032087_0_0_3"/>
<dbReference type="Proteomes" id="UP000002592">
    <property type="component" value="Chromosome"/>
</dbReference>
<dbReference type="GO" id="GO:0003723">
    <property type="term" value="F:RNA binding"/>
    <property type="evidence" value="ECO:0007669"/>
    <property type="project" value="InterPro"/>
</dbReference>
<dbReference type="GO" id="GO:0160148">
    <property type="term" value="F:tRNA pseudouridine(55) synthase activity"/>
    <property type="evidence" value="ECO:0007669"/>
    <property type="project" value="UniProtKB-EC"/>
</dbReference>
<dbReference type="GO" id="GO:1990481">
    <property type="term" value="P:mRNA pseudouridine synthesis"/>
    <property type="evidence" value="ECO:0007669"/>
    <property type="project" value="TreeGrafter"/>
</dbReference>
<dbReference type="GO" id="GO:0031119">
    <property type="term" value="P:tRNA pseudouridine synthesis"/>
    <property type="evidence" value="ECO:0007669"/>
    <property type="project" value="UniProtKB-UniRule"/>
</dbReference>
<dbReference type="CDD" id="cd02573">
    <property type="entry name" value="PseudoU_synth_EcTruB"/>
    <property type="match status" value="1"/>
</dbReference>
<dbReference type="Gene3D" id="3.30.2350.10">
    <property type="entry name" value="Pseudouridine synthase"/>
    <property type="match status" value="1"/>
</dbReference>
<dbReference type="HAMAP" id="MF_01080">
    <property type="entry name" value="TruB_bact"/>
    <property type="match status" value="1"/>
</dbReference>
<dbReference type="InterPro" id="IPR020103">
    <property type="entry name" value="PsdUridine_synth_cat_dom_sf"/>
</dbReference>
<dbReference type="InterPro" id="IPR002501">
    <property type="entry name" value="PsdUridine_synth_N"/>
</dbReference>
<dbReference type="InterPro" id="IPR014780">
    <property type="entry name" value="tRNA_psdUridine_synth_TruB"/>
</dbReference>
<dbReference type="InterPro" id="IPR032819">
    <property type="entry name" value="TruB_C"/>
</dbReference>
<dbReference type="NCBIfam" id="TIGR00431">
    <property type="entry name" value="TruB"/>
    <property type="match status" value="1"/>
</dbReference>
<dbReference type="PANTHER" id="PTHR13767:SF2">
    <property type="entry name" value="PSEUDOURIDYLATE SYNTHASE TRUB1"/>
    <property type="match status" value="1"/>
</dbReference>
<dbReference type="PANTHER" id="PTHR13767">
    <property type="entry name" value="TRNA-PSEUDOURIDINE SYNTHASE"/>
    <property type="match status" value="1"/>
</dbReference>
<dbReference type="Pfam" id="PF16198">
    <property type="entry name" value="TruB_C_2"/>
    <property type="match status" value="1"/>
</dbReference>
<dbReference type="Pfam" id="PF01509">
    <property type="entry name" value="TruB_N"/>
    <property type="match status" value="1"/>
</dbReference>
<dbReference type="SUPFAM" id="SSF55120">
    <property type="entry name" value="Pseudouridine synthase"/>
    <property type="match status" value="1"/>
</dbReference>
<accession>A2C4C0</accession>
<feature type="chain" id="PRO_1000084638" description="tRNA pseudouridine synthase B">
    <location>
        <begin position="1"/>
        <end position="314"/>
    </location>
</feature>
<feature type="active site" description="Nucleophile" evidence="1">
    <location>
        <position position="41"/>
    </location>
</feature>
<comment type="function">
    <text evidence="1">Responsible for synthesis of pseudouridine from uracil-55 in the psi GC loop of transfer RNAs.</text>
</comment>
<comment type="catalytic activity">
    <reaction evidence="1">
        <text>uridine(55) in tRNA = pseudouridine(55) in tRNA</text>
        <dbReference type="Rhea" id="RHEA:42532"/>
        <dbReference type="Rhea" id="RHEA-COMP:10101"/>
        <dbReference type="Rhea" id="RHEA-COMP:10102"/>
        <dbReference type="ChEBI" id="CHEBI:65314"/>
        <dbReference type="ChEBI" id="CHEBI:65315"/>
        <dbReference type="EC" id="5.4.99.25"/>
    </reaction>
</comment>
<comment type="similarity">
    <text evidence="1">Belongs to the pseudouridine synthase TruB family. Type 1 subfamily.</text>
</comment>
<organism>
    <name type="scientific">Prochlorococcus marinus (strain NATL1A)</name>
    <dbReference type="NCBI Taxonomy" id="167555"/>
    <lineage>
        <taxon>Bacteria</taxon>
        <taxon>Bacillati</taxon>
        <taxon>Cyanobacteriota</taxon>
        <taxon>Cyanophyceae</taxon>
        <taxon>Synechococcales</taxon>
        <taxon>Prochlorococcaceae</taxon>
        <taxon>Prochlorococcus</taxon>
    </lineage>
</organism>
<keyword id="KW-0413">Isomerase</keyword>
<keyword id="KW-0819">tRNA processing</keyword>
<gene>
    <name evidence="1" type="primary">truB</name>
    <name type="ordered locus">NATL1_17741</name>
</gene>
<proteinExistence type="inferred from homology"/>
<name>TRUB_PROM1</name>
<evidence type="ECO:0000255" key="1">
    <source>
        <dbReference type="HAMAP-Rule" id="MF_01080"/>
    </source>
</evidence>
<sequence>MEKPFGFVVIDKPSGLTSHDCVNRLRKVFGIRKIGHSGTLDPAVTGVLPIAIGDATRLISYLQGSKAYTGIIQLGATTNTDDMQGEIIESKAWPLITQNDINYLLENFRGEILQKPPIFSSVHIKGERAYKKARKGEKFDLIPKKVTINKLNLISWSQNKGELLVDVDCSTGTYIRSLARDIGDKIGCGGYLKSLRRTKAYNFIENHSVKLPEKSDFYPEEDKPKVLNPNIFFKHLSSFELISEEEIISWRSGRKISFQNNIKRLKVSKNNEVEDSFIHNNNILVLNKENKILGIACLDESFAIKPKVVFNAIG</sequence>
<protein>
    <recommendedName>
        <fullName evidence="1">tRNA pseudouridine synthase B</fullName>
        <ecNumber evidence="1">5.4.99.25</ecNumber>
    </recommendedName>
    <alternativeName>
        <fullName evidence="1">tRNA pseudouridine(55) synthase</fullName>
        <shortName evidence="1">Psi55 synthase</shortName>
    </alternativeName>
    <alternativeName>
        <fullName evidence="1">tRNA pseudouridylate synthase</fullName>
    </alternativeName>
    <alternativeName>
        <fullName evidence="1">tRNA-uridine isomerase</fullName>
    </alternativeName>
</protein>